<reference key="1">
    <citation type="journal article" date="2010" name="J. Bacteriol.">
        <title>Genome sequence of the deep-rooted Yersinia pestis strain Angola reveals new insights into the evolution and pangenome of the plague bacterium.</title>
        <authorList>
            <person name="Eppinger M."/>
            <person name="Worsham P.L."/>
            <person name="Nikolich M.P."/>
            <person name="Riley D.R."/>
            <person name="Sebastian Y."/>
            <person name="Mou S."/>
            <person name="Achtman M."/>
            <person name="Lindler L.E."/>
            <person name="Ravel J."/>
        </authorList>
    </citation>
    <scope>NUCLEOTIDE SEQUENCE [LARGE SCALE GENOMIC DNA]</scope>
    <source>
        <strain>Angola</strain>
    </source>
</reference>
<feature type="chain" id="PRO_0000359106" description="Acetyl-coenzyme A carboxylase carboxyl transferase subunit beta">
    <location>
        <begin position="1"/>
        <end position="304"/>
    </location>
</feature>
<feature type="domain" description="CoA carboxyltransferase N-terminal" evidence="2">
    <location>
        <begin position="25"/>
        <end position="294"/>
    </location>
</feature>
<feature type="zinc finger region" description="C4-type" evidence="1">
    <location>
        <begin position="29"/>
        <end position="51"/>
    </location>
</feature>
<feature type="binding site" evidence="1">
    <location>
        <position position="29"/>
    </location>
    <ligand>
        <name>Zn(2+)</name>
        <dbReference type="ChEBI" id="CHEBI:29105"/>
    </ligand>
</feature>
<feature type="binding site" evidence="1">
    <location>
        <position position="32"/>
    </location>
    <ligand>
        <name>Zn(2+)</name>
        <dbReference type="ChEBI" id="CHEBI:29105"/>
    </ligand>
</feature>
<feature type="binding site" evidence="1">
    <location>
        <position position="48"/>
    </location>
    <ligand>
        <name>Zn(2+)</name>
        <dbReference type="ChEBI" id="CHEBI:29105"/>
    </ligand>
</feature>
<feature type="binding site" evidence="1">
    <location>
        <position position="51"/>
    </location>
    <ligand>
        <name>Zn(2+)</name>
        <dbReference type="ChEBI" id="CHEBI:29105"/>
    </ligand>
</feature>
<dbReference type="EC" id="2.1.3.15" evidence="1"/>
<dbReference type="EMBL" id="CP000901">
    <property type="protein sequence ID" value="ABX85339.1"/>
    <property type="molecule type" value="Genomic_DNA"/>
</dbReference>
<dbReference type="RefSeq" id="WP_002209729.1">
    <property type="nucleotide sequence ID" value="NZ_CP009935.1"/>
</dbReference>
<dbReference type="SMR" id="A9R7U5"/>
<dbReference type="GeneID" id="57975921"/>
<dbReference type="KEGG" id="ypg:YpAngola_A0359"/>
<dbReference type="PATRIC" id="fig|349746.12.peg.1308"/>
<dbReference type="UniPathway" id="UPA00655">
    <property type="reaction ID" value="UER00711"/>
</dbReference>
<dbReference type="GO" id="GO:0009329">
    <property type="term" value="C:acetate CoA-transferase complex"/>
    <property type="evidence" value="ECO:0007669"/>
    <property type="project" value="TreeGrafter"/>
</dbReference>
<dbReference type="GO" id="GO:0003989">
    <property type="term" value="F:acetyl-CoA carboxylase activity"/>
    <property type="evidence" value="ECO:0007669"/>
    <property type="project" value="InterPro"/>
</dbReference>
<dbReference type="GO" id="GO:0005524">
    <property type="term" value="F:ATP binding"/>
    <property type="evidence" value="ECO:0007669"/>
    <property type="project" value="UniProtKB-KW"/>
</dbReference>
<dbReference type="GO" id="GO:0016743">
    <property type="term" value="F:carboxyl- or carbamoyltransferase activity"/>
    <property type="evidence" value="ECO:0007669"/>
    <property type="project" value="UniProtKB-UniRule"/>
</dbReference>
<dbReference type="GO" id="GO:0008270">
    <property type="term" value="F:zinc ion binding"/>
    <property type="evidence" value="ECO:0007669"/>
    <property type="project" value="UniProtKB-UniRule"/>
</dbReference>
<dbReference type="GO" id="GO:0006633">
    <property type="term" value="P:fatty acid biosynthetic process"/>
    <property type="evidence" value="ECO:0007669"/>
    <property type="project" value="UniProtKB-KW"/>
</dbReference>
<dbReference type="GO" id="GO:2001295">
    <property type="term" value="P:malonyl-CoA biosynthetic process"/>
    <property type="evidence" value="ECO:0007669"/>
    <property type="project" value="UniProtKB-UniRule"/>
</dbReference>
<dbReference type="FunFam" id="3.90.226.10:FF:000013">
    <property type="entry name" value="Acetyl-coenzyme A carboxylase carboxyl transferase subunit beta"/>
    <property type="match status" value="1"/>
</dbReference>
<dbReference type="Gene3D" id="3.90.226.10">
    <property type="entry name" value="2-enoyl-CoA Hydratase, Chain A, domain 1"/>
    <property type="match status" value="1"/>
</dbReference>
<dbReference type="HAMAP" id="MF_01395">
    <property type="entry name" value="AcetylCoA_CT_beta"/>
    <property type="match status" value="1"/>
</dbReference>
<dbReference type="InterPro" id="IPR034733">
    <property type="entry name" value="AcCoA_carboxyl_beta"/>
</dbReference>
<dbReference type="InterPro" id="IPR000438">
    <property type="entry name" value="Acetyl_CoA_COase_Trfase_b_su"/>
</dbReference>
<dbReference type="InterPro" id="IPR029045">
    <property type="entry name" value="ClpP/crotonase-like_dom_sf"/>
</dbReference>
<dbReference type="InterPro" id="IPR011762">
    <property type="entry name" value="COA_CT_N"/>
</dbReference>
<dbReference type="InterPro" id="IPR041010">
    <property type="entry name" value="Znf-ACC"/>
</dbReference>
<dbReference type="NCBIfam" id="TIGR00515">
    <property type="entry name" value="accD"/>
    <property type="match status" value="1"/>
</dbReference>
<dbReference type="PANTHER" id="PTHR42995">
    <property type="entry name" value="ACETYL-COENZYME A CARBOXYLASE CARBOXYL TRANSFERASE SUBUNIT BETA, CHLOROPLASTIC"/>
    <property type="match status" value="1"/>
</dbReference>
<dbReference type="PANTHER" id="PTHR42995:SF5">
    <property type="entry name" value="ACETYL-COENZYME A CARBOXYLASE CARBOXYL TRANSFERASE SUBUNIT BETA, CHLOROPLASTIC"/>
    <property type="match status" value="1"/>
</dbReference>
<dbReference type="Pfam" id="PF01039">
    <property type="entry name" value="Carboxyl_trans"/>
    <property type="match status" value="1"/>
</dbReference>
<dbReference type="Pfam" id="PF17848">
    <property type="entry name" value="Zn_ribbon_ACC"/>
    <property type="match status" value="1"/>
</dbReference>
<dbReference type="PRINTS" id="PR01070">
    <property type="entry name" value="ACCCTRFRASEB"/>
</dbReference>
<dbReference type="SUPFAM" id="SSF52096">
    <property type="entry name" value="ClpP/crotonase"/>
    <property type="match status" value="1"/>
</dbReference>
<dbReference type="PROSITE" id="PS50980">
    <property type="entry name" value="COA_CT_NTER"/>
    <property type="match status" value="1"/>
</dbReference>
<accession>A9R7U5</accession>
<protein>
    <recommendedName>
        <fullName evidence="1">Acetyl-coenzyme A carboxylase carboxyl transferase subunit beta</fullName>
        <shortName evidence="1">ACCase subunit beta</shortName>
        <shortName evidence="1">Acetyl-CoA carboxylase carboxyltransferase subunit beta</shortName>
        <ecNumber evidence="1">2.1.3.15</ecNumber>
    </recommendedName>
</protein>
<gene>
    <name evidence="1" type="primary">accD</name>
    <name type="ordered locus">YpAngola_A0359</name>
</gene>
<proteinExistence type="inferred from homology"/>
<evidence type="ECO:0000255" key="1">
    <source>
        <dbReference type="HAMAP-Rule" id="MF_01395"/>
    </source>
</evidence>
<evidence type="ECO:0000255" key="2">
    <source>
        <dbReference type="PROSITE-ProRule" id="PRU01136"/>
    </source>
</evidence>
<keyword id="KW-0067">ATP-binding</keyword>
<keyword id="KW-0963">Cytoplasm</keyword>
<keyword id="KW-0275">Fatty acid biosynthesis</keyword>
<keyword id="KW-0276">Fatty acid metabolism</keyword>
<keyword id="KW-0444">Lipid biosynthesis</keyword>
<keyword id="KW-0443">Lipid metabolism</keyword>
<keyword id="KW-0479">Metal-binding</keyword>
<keyword id="KW-0547">Nucleotide-binding</keyword>
<keyword id="KW-0808">Transferase</keyword>
<keyword id="KW-0862">Zinc</keyword>
<keyword id="KW-0863">Zinc-finger</keyword>
<organism>
    <name type="scientific">Yersinia pestis bv. Antiqua (strain Angola)</name>
    <dbReference type="NCBI Taxonomy" id="349746"/>
    <lineage>
        <taxon>Bacteria</taxon>
        <taxon>Pseudomonadati</taxon>
        <taxon>Pseudomonadota</taxon>
        <taxon>Gammaproteobacteria</taxon>
        <taxon>Enterobacterales</taxon>
        <taxon>Yersiniaceae</taxon>
        <taxon>Yersinia</taxon>
    </lineage>
</organism>
<sequence>MSWIERILNKSNITQTRKASIPEGVWTKCDSCGQVLYRAELERNLEVCPKCDHHMRMSARARLHMLLDAGSEVELGSELEPKDILKFRDSKKYKDRISAAQKDTGEKDALVAMKGTLQGMPIVAASFEFAFMGGSMASVVGARFVRAVEQALEDNCPLVCFSSSGGARMQEALMSLMQMAKTSAALAKMQERGLPYISVLTDPTMGGVSASLAMLGDINIAEPKALIGFAGPRVIEQTVREKLPPGFQRSEFLIEKGAIDMIVRRPVMRQTLASILSKLTHQPQPSVVESKADTVAQPENQADV</sequence>
<name>ACCD_YERPG</name>
<comment type="function">
    <text evidence="1">Component of the acetyl coenzyme A carboxylase (ACC) complex. Biotin carboxylase (BC) catalyzes the carboxylation of biotin on its carrier protein (BCCP) and then the CO(2) group is transferred by the transcarboxylase to acetyl-CoA to form malonyl-CoA.</text>
</comment>
<comment type="catalytic activity">
    <reaction evidence="1">
        <text>N(6)-carboxybiotinyl-L-lysyl-[protein] + acetyl-CoA = N(6)-biotinyl-L-lysyl-[protein] + malonyl-CoA</text>
        <dbReference type="Rhea" id="RHEA:54728"/>
        <dbReference type="Rhea" id="RHEA-COMP:10505"/>
        <dbReference type="Rhea" id="RHEA-COMP:10506"/>
        <dbReference type="ChEBI" id="CHEBI:57288"/>
        <dbReference type="ChEBI" id="CHEBI:57384"/>
        <dbReference type="ChEBI" id="CHEBI:83144"/>
        <dbReference type="ChEBI" id="CHEBI:83145"/>
        <dbReference type="EC" id="2.1.3.15"/>
    </reaction>
</comment>
<comment type="cofactor">
    <cofactor evidence="1">
        <name>Zn(2+)</name>
        <dbReference type="ChEBI" id="CHEBI:29105"/>
    </cofactor>
    <text evidence="1">Binds 1 zinc ion per subunit.</text>
</comment>
<comment type="pathway">
    <text evidence="1">Lipid metabolism; malonyl-CoA biosynthesis; malonyl-CoA from acetyl-CoA: step 1/1.</text>
</comment>
<comment type="subunit">
    <text evidence="1">Acetyl-CoA carboxylase is a heterohexamer composed of biotin carboxyl carrier protein (AccB), biotin carboxylase (AccC) and two subunits each of ACCase subunit alpha (AccA) and ACCase subunit beta (AccD).</text>
</comment>
<comment type="subcellular location">
    <subcellularLocation>
        <location evidence="1">Cytoplasm</location>
    </subcellularLocation>
</comment>
<comment type="similarity">
    <text evidence="1">Belongs to the AccD/PCCB family.</text>
</comment>